<reference key="1">
    <citation type="journal article" date="2006" name="Genome Res.">
        <title>Massive genome erosion and functional adaptations provide insights into the symbiotic lifestyle of Sodalis glossinidius in the tsetse host.</title>
        <authorList>
            <person name="Toh H."/>
            <person name="Weiss B.L."/>
            <person name="Perkin S.A.H."/>
            <person name="Yamashita A."/>
            <person name="Oshima K."/>
            <person name="Hattori M."/>
            <person name="Aksoy S."/>
        </authorList>
    </citation>
    <scope>NUCLEOTIDE SEQUENCE [LARGE SCALE GENOMIC DNA]</scope>
    <source>
        <strain>morsitans</strain>
    </source>
</reference>
<feature type="chain" id="PRO_1000204801" description="Bifunctional uridylyltransferase/uridylyl-removing enzyme">
    <location>
        <begin position="1"/>
        <end position="896"/>
    </location>
</feature>
<feature type="domain" description="HD" evidence="2">
    <location>
        <begin position="474"/>
        <end position="596"/>
    </location>
</feature>
<feature type="domain" description="ACT 1" evidence="1">
    <location>
        <begin position="715"/>
        <end position="796"/>
    </location>
</feature>
<feature type="domain" description="ACT 2" evidence="1">
    <location>
        <begin position="822"/>
        <end position="896"/>
    </location>
</feature>
<feature type="region of interest" description="Uridylyltransferase">
    <location>
        <begin position="1"/>
        <end position="355"/>
    </location>
</feature>
<feature type="region of interest" description="Disordered" evidence="3">
    <location>
        <begin position="1"/>
        <end position="31"/>
    </location>
</feature>
<feature type="region of interest" description="Uridylyl-removing">
    <location>
        <begin position="356"/>
        <end position="714"/>
    </location>
</feature>
<feature type="compositionally biased region" description="Pro residues" evidence="3">
    <location>
        <begin position="16"/>
        <end position="26"/>
    </location>
</feature>
<sequence length="896" mass="103328">MQGDPMPDQILQFTHPPVPRQPPVKPSSPLTWPDDALNRPFLKERLDEFQRWLADAFDAGETAEILVDARTLYIDQLLRQLWHYHGLAHAPHTALVAVGGYGRGELHPLSDIDVLVLSQAPLTPPQQQHISELLTLLWDLKLEVGHSVRSIAECLEEGRADLTVATNLIESRLICGDLALFLTLQKQVFSDDFWPSRAFFPAKLAEQQERHSRYHGTSYNLEPDIKSSPGGLRDIHTLLWVAHRHFGATSMDEMVGFGFITRAERDELNECQSFLWRTRFALHLVLNRYDNRLLFDRQQNVAQLLRYQGEGNLPVERMMKDFFRVTRRVSELNQMLLQLFDEAILALAPDEKPQPLDDEFQLRGNLIDLRDETLFSRQPEAILLLFWQMVRNRHIEGIYSATLRQLRYARRHLKAPLCTSPEARTLFMRILHQPGAVKHALLPMHRHSVLWAYMPQWSNIVGQMQFDLFHAYTVDEHTIRVLLKLESFADESQRPYHPLCVELFPRLSQRHLLLVAALFHDIAKGRGGDHSQLGARDVLEFAALHDLPAEDAQLVAWLVESHLVMSVTAQRRDIQEPDVLVQFAGEMQSESRLHYLLCLTVADICATNETLWNSWKQSLLRELFFATEKQLRRGIHVSPDVRERVRHNRRQSLVLLRMEGIDEQRLQEIWSRCRADYFLRHTPNQLAWHARHMVLHDHDEPLVLISPQATRGGTEIFIHNQDRPYLFAAVTGELDRRNLSVHDAQIFTNRDGMAMDTFVVLEPDGSPLSPDRHPVIRQALLQILLPGDYRHPRVRRPSSKLRHFNVDTSVVFLPSPTERRSYLELTALDQPGLLARVSEVFVDLGISLHGARISTIGERVEDLFILADGDRRALSRAMQAEVRRRLTEALNPNDKV</sequence>
<dbReference type="EC" id="2.7.7.59" evidence="1"/>
<dbReference type="EC" id="3.1.4.-" evidence="1"/>
<dbReference type="EMBL" id="AP008232">
    <property type="protein sequence ID" value="BAE75220.1"/>
    <property type="molecule type" value="Genomic_DNA"/>
</dbReference>
<dbReference type="SMR" id="Q2NRK5"/>
<dbReference type="STRING" id="343509.SG1945"/>
<dbReference type="KEGG" id="sgl:SG1945"/>
<dbReference type="eggNOG" id="COG2844">
    <property type="taxonomic scope" value="Bacteria"/>
</dbReference>
<dbReference type="HOGENOM" id="CLU_012833_0_0_6"/>
<dbReference type="Proteomes" id="UP000001932">
    <property type="component" value="Chromosome"/>
</dbReference>
<dbReference type="GO" id="GO:0008773">
    <property type="term" value="F:[protein-PII] uridylyltransferase activity"/>
    <property type="evidence" value="ECO:0007669"/>
    <property type="project" value="UniProtKB-UniRule"/>
</dbReference>
<dbReference type="GO" id="GO:0008081">
    <property type="term" value="F:phosphoric diester hydrolase activity"/>
    <property type="evidence" value="ECO:0007669"/>
    <property type="project" value="UniProtKB-UniRule"/>
</dbReference>
<dbReference type="GO" id="GO:0006808">
    <property type="term" value="P:regulation of nitrogen utilization"/>
    <property type="evidence" value="ECO:0007669"/>
    <property type="project" value="UniProtKB-UniRule"/>
</dbReference>
<dbReference type="CDD" id="cd04899">
    <property type="entry name" value="ACT_ACR-UUR-like_2"/>
    <property type="match status" value="1"/>
</dbReference>
<dbReference type="CDD" id="cd04900">
    <property type="entry name" value="ACT_UUR-like_1"/>
    <property type="match status" value="1"/>
</dbReference>
<dbReference type="CDD" id="cd00077">
    <property type="entry name" value="HDc"/>
    <property type="match status" value="1"/>
</dbReference>
<dbReference type="CDD" id="cd05401">
    <property type="entry name" value="NT_GlnE_GlnD_like"/>
    <property type="match status" value="1"/>
</dbReference>
<dbReference type="Gene3D" id="1.10.3210.10">
    <property type="entry name" value="Hypothetical protein af1432"/>
    <property type="match status" value="1"/>
</dbReference>
<dbReference type="HAMAP" id="MF_00277">
    <property type="entry name" value="PII_uridylyl_transf"/>
    <property type="match status" value="1"/>
</dbReference>
<dbReference type="InterPro" id="IPR045865">
    <property type="entry name" value="ACT-like_dom_sf"/>
</dbReference>
<dbReference type="InterPro" id="IPR002912">
    <property type="entry name" value="ACT_dom"/>
</dbReference>
<dbReference type="InterPro" id="IPR003607">
    <property type="entry name" value="HD/PDEase_dom"/>
</dbReference>
<dbReference type="InterPro" id="IPR006674">
    <property type="entry name" value="HD_domain"/>
</dbReference>
<dbReference type="InterPro" id="IPR043519">
    <property type="entry name" value="NT_sf"/>
</dbReference>
<dbReference type="InterPro" id="IPR013546">
    <property type="entry name" value="PII_UdlTrfase/GS_AdlTrfase"/>
</dbReference>
<dbReference type="InterPro" id="IPR002934">
    <property type="entry name" value="Polymerase_NTP_transf_dom"/>
</dbReference>
<dbReference type="InterPro" id="IPR010043">
    <property type="entry name" value="UTase/UR"/>
</dbReference>
<dbReference type="NCBIfam" id="NF002487">
    <property type="entry name" value="PRK01759.1"/>
    <property type="match status" value="1"/>
</dbReference>
<dbReference type="NCBIfam" id="NF003448">
    <property type="entry name" value="PRK05007.1"/>
    <property type="match status" value="1"/>
</dbReference>
<dbReference type="NCBIfam" id="TIGR01693">
    <property type="entry name" value="UTase_glnD"/>
    <property type="match status" value="1"/>
</dbReference>
<dbReference type="PANTHER" id="PTHR47320">
    <property type="entry name" value="BIFUNCTIONAL URIDYLYLTRANSFERASE/URIDYLYL-REMOVING ENZYME"/>
    <property type="match status" value="1"/>
</dbReference>
<dbReference type="PANTHER" id="PTHR47320:SF1">
    <property type="entry name" value="BIFUNCTIONAL URIDYLYLTRANSFERASE_URIDYLYL-REMOVING ENZYME"/>
    <property type="match status" value="1"/>
</dbReference>
<dbReference type="Pfam" id="PF01842">
    <property type="entry name" value="ACT"/>
    <property type="match status" value="2"/>
</dbReference>
<dbReference type="Pfam" id="PF08335">
    <property type="entry name" value="GlnD_UR_UTase"/>
    <property type="match status" value="1"/>
</dbReference>
<dbReference type="Pfam" id="PF01966">
    <property type="entry name" value="HD"/>
    <property type="match status" value="1"/>
</dbReference>
<dbReference type="Pfam" id="PF01909">
    <property type="entry name" value="NTP_transf_2"/>
    <property type="match status" value="1"/>
</dbReference>
<dbReference type="PIRSF" id="PIRSF006288">
    <property type="entry name" value="PII_uridyltransf"/>
    <property type="match status" value="1"/>
</dbReference>
<dbReference type="SMART" id="SM00471">
    <property type="entry name" value="HDc"/>
    <property type="match status" value="1"/>
</dbReference>
<dbReference type="SUPFAM" id="SSF55021">
    <property type="entry name" value="ACT-like"/>
    <property type="match status" value="2"/>
</dbReference>
<dbReference type="SUPFAM" id="SSF109604">
    <property type="entry name" value="HD-domain/PDEase-like"/>
    <property type="match status" value="1"/>
</dbReference>
<dbReference type="SUPFAM" id="SSF81301">
    <property type="entry name" value="Nucleotidyltransferase"/>
    <property type="match status" value="1"/>
</dbReference>
<dbReference type="SUPFAM" id="SSF81593">
    <property type="entry name" value="Nucleotidyltransferase substrate binding subunit/domain"/>
    <property type="match status" value="1"/>
</dbReference>
<dbReference type="SUPFAM" id="SSF81891">
    <property type="entry name" value="Poly A polymerase C-terminal region-like"/>
    <property type="match status" value="1"/>
</dbReference>
<dbReference type="PROSITE" id="PS51671">
    <property type="entry name" value="ACT"/>
    <property type="match status" value="2"/>
</dbReference>
<dbReference type="PROSITE" id="PS51831">
    <property type="entry name" value="HD"/>
    <property type="match status" value="1"/>
</dbReference>
<organism>
    <name type="scientific">Sodalis glossinidius (strain morsitans)</name>
    <dbReference type="NCBI Taxonomy" id="343509"/>
    <lineage>
        <taxon>Bacteria</taxon>
        <taxon>Pseudomonadati</taxon>
        <taxon>Pseudomonadota</taxon>
        <taxon>Gammaproteobacteria</taxon>
        <taxon>Enterobacterales</taxon>
        <taxon>Bruguierivoracaceae</taxon>
        <taxon>Sodalis</taxon>
    </lineage>
</organism>
<accession>Q2NRK5</accession>
<gene>
    <name evidence="1" type="primary">glnD</name>
    <name type="ordered locus">SG1945</name>
</gene>
<name>GLND_SODGM</name>
<keyword id="KW-0378">Hydrolase</keyword>
<keyword id="KW-0460">Magnesium</keyword>
<keyword id="KW-0511">Multifunctional enzyme</keyword>
<keyword id="KW-0548">Nucleotidyltransferase</keyword>
<keyword id="KW-0677">Repeat</keyword>
<keyword id="KW-0808">Transferase</keyword>
<comment type="function">
    <text evidence="1">Modifies, by uridylylation and deuridylylation, the PII regulatory proteins (GlnB and homologs), in response to the nitrogen status of the cell that GlnD senses through the glutamine level. Under low glutamine levels, catalyzes the conversion of the PII proteins and UTP to PII-UMP and PPi, while under higher glutamine levels, GlnD hydrolyzes PII-UMP to PII and UMP (deuridylylation). Thus, controls uridylylation state and activity of the PII proteins, and plays an important role in the regulation of nitrogen assimilation and metabolism.</text>
</comment>
<comment type="catalytic activity">
    <reaction evidence="1">
        <text>[protein-PII]-L-tyrosine + UTP = [protein-PII]-uridylyl-L-tyrosine + diphosphate</text>
        <dbReference type="Rhea" id="RHEA:13673"/>
        <dbReference type="Rhea" id="RHEA-COMP:12147"/>
        <dbReference type="Rhea" id="RHEA-COMP:12148"/>
        <dbReference type="ChEBI" id="CHEBI:33019"/>
        <dbReference type="ChEBI" id="CHEBI:46398"/>
        <dbReference type="ChEBI" id="CHEBI:46858"/>
        <dbReference type="ChEBI" id="CHEBI:90602"/>
        <dbReference type="EC" id="2.7.7.59"/>
    </reaction>
</comment>
<comment type="catalytic activity">
    <reaction evidence="1">
        <text>[protein-PII]-uridylyl-L-tyrosine + H2O = [protein-PII]-L-tyrosine + UMP + H(+)</text>
        <dbReference type="Rhea" id="RHEA:48600"/>
        <dbReference type="Rhea" id="RHEA-COMP:12147"/>
        <dbReference type="Rhea" id="RHEA-COMP:12148"/>
        <dbReference type="ChEBI" id="CHEBI:15377"/>
        <dbReference type="ChEBI" id="CHEBI:15378"/>
        <dbReference type="ChEBI" id="CHEBI:46858"/>
        <dbReference type="ChEBI" id="CHEBI:57865"/>
        <dbReference type="ChEBI" id="CHEBI:90602"/>
    </reaction>
</comment>
<comment type="cofactor">
    <cofactor evidence="1">
        <name>Mg(2+)</name>
        <dbReference type="ChEBI" id="CHEBI:18420"/>
    </cofactor>
</comment>
<comment type="activity regulation">
    <text evidence="1">Uridylyltransferase (UTase) activity is inhibited by glutamine, while glutamine activates uridylyl-removing (UR) activity.</text>
</comment>
<comment type="domain">
    <text evidence="1">Has four distinct domains: an N-terminal nucleotidyltransferase (NT) domain responsible for UTase activity, a central HD domain that encodes UR activity, and two C-terminal ACT domains that seem to have a role in glutamine sensing.</text>
</comment>
<comment type="similarity">
    <text evidence="1">Belongs to the GlnD family.</text>
</comment>
<protein>
    <recommendedName>
        <fullName evidence="1">Bifunctional uridylyltransferase/uridylyl-removing enzyme</fullName>
        <shortName evidence="1">UTase/UR</shortName>
    </recommendedName>
    <alternativeName>
        <fullName evidence="1">Bifunctional [protein-PII] modification enzyme</fullName>
    </alternativeName>
    <alternativeName>
        <fullName evidence="1">Bifunctional nitrogen sensor protein</fullName>
    </alternativeName>
    <domain>
        <recommendedName>
            <fullName evidence="1">[Protein-PII] uridylyltransferase</fullName>
            <shortName evidence="1">PII uridylyltransferase</shortName>
            <shortName evidence="1">UTase</shortName>
            <ecNumber evidence="1">2.7.7.59</ecNumber>
        </recommendedName>
    </domain>
    <domain>
        <recommendedName>
            <fullName evidence="1">[Protein-PII]-UMP uridylyl-removing enzyme</fullName>
            <shortName evidence="1">UR</shortName>
            <ecNumber evidence="1">3.1.4.-</ecNumber>
        </recommendedName>
    </domain>
</protein>
<proteinExistence type="inferred from homology"/>
<evidence type="ECO:0000255" key="1">
    <source>
        <dbReference type="HAMAP-Rule" id="MF_00277"/>
    </source>
</evidence>
<evidence type="ECO:0000255" key="2">
    <source>
        <dbReference type="PROSITE-ProRule" id="PRU01175"/>
    </source>
</evidence>
<evidence type="ECO:0000256" key="3">
    <source>
        <dbReference type="SAM" id="MobiDB-lite"/>
    </source>
</evidence>